<accession>Q2RMH1</accession>
<organism>
    <name type="scientific">Moorella thermoacetica (strain ATCC 39073 / JCM 9320)</name>
    <dbReference type="NCBI Taxonomy" id="264732"/>
    <lineage>
        <taxon>Bacteria</taxon>
        <taxon>Bacillati</taxon>
        <taxon>Bacillota</taxon>
        <taxon>Clostridia</taxon>
        <taxon>Moorellales</taxon>
        <taxon>Moorellaceae</taxon>
        <taxon>Moorella</taxon>
    </lineage>
</organism>
<evidence type="ECO:0000255" key="1">
    <source>
        <dbReference type="HAMAP-Rule" id="MF_00274"/>
    </source>
</evidence>
<reference key="1">
    <citation type="journal article" date="2008" name="Environ. Microbiol.">
        <title>The complete genome sequence of Moorella thermoacetica (f. Clostridium thermoaceticum).</title>
        <authorList>
            <person name="Pierce E."/>
            <person name="Xie G."/>
            <person name="Barabote R.D."/>
            <person name="Saunders E."/>
            <person name="Han C.S."/>
            <person name="Detter J.C."/>
            <person name="Richardson P."/>
            <person name="Brettin T.S."/>
            <person name="Das A."/>
            <person name="Ljungdahl L.G."/>
            <person name="Ragsdale S.W."/>
        </authorList>
    </citation>
    <scope>NUCLEOTIDE SEQUENCE [LARGE SCALE GENOMIC DNA]</scope>
    <source>
        <strain>ATCC 39073 / JCM 9320</strain>
    </source>
</reference>
<dbReference type="EMBL" id="CP000232">
    <property type="protein sequence ID" value="ABC18368.1"/>
    <property type="molecule type" value="Genomic_DNA"/>
</dbReference>
<dbReference type="RefSeq" id="YP_428911.1">
    <property type="nucleotide sequence ID" value="NC_007644.1"/>
</dbReference>
<dbReference type="SMR" id="Q2RMH1"/>
<dbReference type="STRING" id="264732.Moth_0028"/>
<dbReference type="EnsemblBacteria" id="ABC18368">
    <property type="protein sequence ID" value="ABC18368"/>
    <property type="gene ID" value="Moth_0028"/>
</dbReference>
<dbReference type="KEGG" id="mta:Moth_0028"/>
<dbReference type="PATRIC" id="fig|264732.11.peg.29"/>
<dbReference type="eggNOG" id="COG0718">
    <property type="taxonomic scope" value="Bacteria"/>
</dbReference>
<dbReference type="HOGENOM" id="CLU_140930_1_0_9"/>
<dbReference type="OrthoDB" id="9795263at2"/>
<dbReference type="GO" id="GO:0043590">
    <property type="term" value="C:bacterial nucleoid"/>
    <property type="evidence" value="ECO:0007669"/>
    <property type="project" value="UniProtKB-UniRule"/>
</dbReference>
<dbReference type="GO" id="GO:0005829">
    <property type="term" value="C:cytosol"/>
    <property type="evidence" value="ECO:0007669"/>
    <property type="project" value="TreeGrafter"/>
</dbReference>
<dbReference type="GO" id="GO:0003677">
    <property type="term" value="F:DNA binding"/>
    <property type="evidence" value="ECO:0007669"/>
    <property type="project" value="UniProtKB-UniRule"/>
</dbReference>
<dbReference type="Gene3D" id="3.30.1310.10">
    <property type="entry name" value="Nucleoid-associated protein YbaB-like domain"/>
    <property type="match status" value="1"/>
</dbReference>
<dbReference type="HAMAP" id="MF_00274">
    <property type="entry name" value="DNA_YbaB_EbfC"/>
    <property type="match status" value="1"/>
</dbReference>
<dbReference type="InterPro" id="IPR036894">
    <property type="entry name" value="YbaB-like_sf"/>
</dbReference>
<dbReference type="InterPro" id="IPR004401">
    <property type="entry name" value="YbaB/EbfC"/>
</dbReference>
<dbReference type="NCBIfam" id="TIGR00103">
    <property type="entry name" value="DNA_YbaB_EbfC"/>
    <property type="match status" value="1"/>
</dbReference>
<dbReference type="PANTHER" id="PTHR33449">
    <property type="entry name" value="NUCLEOID-ASSOCIATED PROTEIN YBAB"/>
    <property type="match status" value="1"/>
</dbReference>
<dbReference type="PANTHER" id="PTHR33449:SF1">
    <property type="entry name" value="NUCLEOID-ASSOCIATED PROTEIN YBAB"/>
    <property type="match status" value="1"/>
</dbReference>
<dbReference type="Pfam" id="PF02575">
    <property type="entry name" value="YbaB_DNA_bd"/>
    <property type="match status" value="1"/>
</dbReference>
<dbReference type="PIRSF" id="PIRSF004555">
    <property type="entry name" value="UCP004555"/>
    <property type="match status" value="1"/>
</dbReference>
<dbReference type="SUPFAM" id="SSF82607">
    <property type="entry name" value="YbaB-like"/>
    <property type="match status" value="1"/>
</dbReference>
<gene>
    <name type="ordered locus">Moth_0028</name>
</gene>
<feature type="chain" id="PRO_1000003772" description="Nucleoid-associated protein Moth_0028">
    <location>
        <begin position="1"/>
        <end position="104"/>
    </location>
</feature>
<keyword id="KW-0963">Cytoplasm</keyword>
<keyword id="KW-0238">DNA-binding</keyword>
<sequence length="104" mass="11381">MGMGNMNKMMKQMQKMQAQVARLQEELGERTVEASAGGGVVKVTANGRQELVNIKIDPAAVDPEDVEMLQDLILAAVNEALHQSQEMVTREMAKITGNIRLPGF</sequence>
<name>Y028_MOOTA</name>
<protein>
    <recommendedName>
        <fullName evidence="1">Nucleoid-associated protein Moth_0028</fullName>
    </recommendedName>
</protein>
<comment type="function">
    <text evidence="1">Binds to DNA and alters its conformation. May be involved in regulation of gene expression, nucleoid organization and DNA protection.</text>
</comment>
<comment type="subunit">
    <text evidence="1">Homodimer.</text>
</comment>
<comment type="subcellular location">
    <subcellularLocation>
        <location evidence="1">Cytoplasm</location>
        <location evidence="1">Nucleoid</location>
    </subcellularLocation>
</comment>
<comment type="similarity">
    <text evidence="1">Belongs to the YbaB/EbfC family.</text>
</comment>
<proteinExistence type="inferred from homology"/>